<reference key="1">
    <citation type="journal article" date="1994" name="J. Bacteriol.">
        <title>Growth phase-dependent transcription of the genes that encode the two methyl coenzyme M reductase isoenzymes and N5-methyltetrahydromethanopterin:coenzyme M methyltransferase in Methanobacterium thermoautotrophicum delta H.</title>
        <authorList>
            <person name="Pihl T.D."/>
            <person name="Sharma S."/>
            <person name="Reeve J.N."/>
        </authorList>
    </citation>
    <scope>NUCLEOTIDE SEQUENCE [GENOMIC DNA]</scope>
    <source>
        <strain>ATCC 29096 / DSM 1053 / JCM 10044 / NBRC 100330 / Delta H</strain>
    </source>
</reference>
<reference key="2">
    <citation type="journal article" date="1997" name="J. Bacteriol.">
        <title>Complete genome sequence of Methanobacterium thermoautotrophicum deltaH: functional analysis and comparative genomics.</title>
        <authorList>
            <person name="Smith D.R."/>
            <person name="Doucette-Stamm L.A."/>
            <person name="Deloughery C."/>
            <person name="Lee H.-M."/>
            <person name="Dubois J."/>
            <person name="Aldredge T."/>
            <person name="Bashirzadeh R."/>
            <person name="Blakely D."/>
            <person name="Cook R."/>
            <person name="Gilbert K."/>
            <person name="Harrison D."/>
            <person name="Hoang L."/>
            <person name="Keagle P."/>
            <person name="Lumm W."/>
            <person name="Pothier B."/>
            <person name="Qiu D."/>
            <person name="Spadafora R."/>
            <person name="Vicare R."/>
            <person name="Wang Y."/>
            <person name="Wierzbowski J."/>
            <person name="Gibson R."/>
            <person name="Jiwani N."/>
            <person name="Caruso A."/>
            <person name="Bush D."/>
            <person name="Safer H."/>
            <person name="Patwell D."/>
            <person name="Prabhakar S."/>
            <person name="McDougall S."/>
            <person name="Shimer G."/>
            <person name="Goyal A."/>
            <person name="Pietrovski S."/>
            <person name="Church G.M."/>
            <person name="Daniels C.J."/>
            <person name="Mao J.-I."/>
            <person name="Rice P."/>
            <person name="Noelling J."/>
            <person name="Reeve J.N."/>
        </authorList>
    </citation>
    <scope>NUCLEOTIDE SEQUENCE [LARGE SCALE GENOMIC DNA]</scope>
    <source>
        <strain>ATCC 29096 / DSM 1053 / JCM 10044 / NBRC 100330 / Delta H</strain>
    </source>
</reference>
<reference key="3">
    <citation type="journal article" date="1990" name="Eur. J. Biochem.">
        <title>Two genetically distinct methyl-coenzyme M reductases in Methanobacterium thermoautotrophicum strain Marburg and delta H.</title>
        <authorList>
            <person name="Rospert S."/>
            <person name="Linder D."/>
            <person name="Ellermann J."/>
            <person name="Thauer R.K."/>
        </authorList>
    </citation>
    <scope>PROTEIN SEQUENCE OF 2-19</scope>
    <scope>FUNCTION</scope>
    <scope>CATALYTIC ACTIVITY</scope>
    <scope>SUBUNIT</scope>
    <source>
        <strain>ATCC 29096 / DSM 1053 / JCM 10044 / NBRC 100330 / Delta H</strain>
    </source>
</reference>
<reference key="4">
    <citation type="journal article" date="1987" name="Biochem. Biophys. Res. Commun.">
        <title>Evidence that the heterodisulfide of coenzyme M and 7-mercaptoheptanoylthreonine phosphate is a product of the methylreductase reaction in Methanobacterium.</title>
        <authorList>
            <person name="Bobik T.A."/>
            <person name="Olson K.D."/>
            <person name="Noll K.M."/>
            <person name="Wolfe R.S."/>
        </authorList>
    </citation>
    <scope>FUNCTION</scope>
    <scope>CATALYTIC ACTIVITY</scope>
    <source>
        <strain>ATCC 29096 / DSM 1053 / JCM 10044 / NBRC 100330 / Delta H</strain>
    </source>
</reference>
<proteinExistence type="evidence at protein level"/>
<accession>O27232</accession>
<accession>Q50493</accession>
<gene>
    <name type="primary">mcrA</name>
    <name type="ordered locus">MTH_1164</name>
</gene>
<sequence>MADKLFINALKKKFEESPEEKKTTFYTLGGWKQSERKTEFVNAGKEVAAKRGIPQYNPDIGTPLGQRVLMPYQVSTTDTFVEGDDLHFVNNAAMQQMWDDIRRTVIVGLNHAHAVIEKRLGKEVTPETITHYLETVNHAMPGAAVVQEHMVETHPALVADSYVKVFTGNDEIADEIDPAFVIDINKQFPEDQAETLKAEVGDGIWQVVRIPTIVSRTCDGATTSRWSAMQIGMSMISAYKQAAGEAATGDFAYAAKHAEVIHMGTYLPVRRARGENEPGGVPFGYLADICQSSRVNYEDPVRVSLDVVATGAMLYDQIWLGSYMSGGVGFTQYATAAYTDNILDDFTYFGKEYVEDKYGLCEAPNTMDTVLDVASEVTFYGLEQYEEYPALLEDQFGGSQRAAVVAAAAGCSTAFATANAQTGLSGWYLSMYLHKEQHSRLGFYGYDLQDQCGASNVFSIRGDEGLPLELRGPNYPNYAMNVGHQGEYAGISQAPHAARGDAFVFNPLVKIAFADDNLVFDFTNVRGEFAKGALREFEPAGERALITPAK</sequence>
<comment type="function">
    <text evidence="3 4">Component of the methyl-coenzyme M reductase (MCR) I that catalyzes the reductive cleavage of methyl-coenzyme M (CoM-S-CH3 or 2-(methylthio)ethanesulfonate) using coenzyme B (CoB or 7-mercaptoheptanoylthreonine phosphate) as reductant which results in the production of methane and the mixed heterodisulfide of CoB and CoM (CoM-S-S-CoB). This is the final step in methanogenesis.</text>
</comment>
<comment type="catalytic activity">
    <reaction evidence="3 4">
        <text>coenzyme B + methyl-coenzyme M = methane + coenzyme M-coenzyme B heterodisulfide</text>
        <dbReference type="Rhea" id="RHEA:12532"/>
        <dbReference type="ChEBI" id="CHEBI:16183"/>
        <dbReference type="ChEBI" id="CHEBI:58286"/>
        <dbReference type="ChEBI" id="CHEBI:58411"/>
        <dbReference type="ChEBI" id="CHEBI:58596"/>
        <dbReference type="EC" id="2.8.4.1"/>
    </reaction>
    <physiologicalReaction direction="left-to-right" evidence="7">
        <dbReference type="Rhea" id="RHEA:12533"/>
    </physiologicalReaction>
</comment>
<comment type="cofactor">
    <cofactor evidence="1">
        <name>coenzyme F430</name>
        <dbReference type="ChEBI" id="CHEBI:60540"/>
    </cofactor>
    <text evidence="1">Binds 2 coenzyme F430 non-covalently per MCR complex. Coenzyme F430 is a yellow nickel porphinoid. Methyl-coenzyme-M reductase is activated when the enzyme-bound coenzyme F430 is reduced to the Ni(I) oxidation state.</text>
</comment>
<comment type="pathway">
    <text evidence="7">One-carbon metabolism; methyl-coenzyme M reduction; methane from methyl-coenzyme M: step 1/1.</text>
</comment>
<comment type="subunit">
    <text evidence="3">MCR is a hexamer of two alpha, two beta, and two gamma chains, forming a dimer of heterotrimers.</text>
</comment>
<comment type="subcellular location">
    <subcellularLocation>
        <location evidence="1">Cytoplasm</location>
    </subcellularLocation>
</comment>
<comment type="developmental stage">
    <text evidence="1">There are two MCR complexes in this bacteria. MCR II is expressed in the early growth phase. Late growth cells contain mostly MCR I.</text>
</comment>
<comment type="PTM">
    <text evidence="1 2">The alpha subunit contains six modified amino acids near the active site region. Is methylated on His-257, Arg-271, Gln-400 and Cys-452, probably by the action of specific S-adenosylmethionine-dependent methyltransferases. Also contains a thioglycine at position 445, forming a thiopeptide bond. Contains a didehydroaspartate residue at position 450 (By similarity). The methylation on C5 of Arg-271 is a post-translational methylation not essential in vivo, but which plays a role for the stability and structural integrity of MCR (By similarity).</text>
</comment>
<comment type="similarity">
    <text evidence="6">Belongs to the methyl-coenzyme M reductase alpha subunit family.</text>
</comment>
<feature type="initiator methionine" description="Removed" evidence="3">
    <location>
        <position position="1"/>
    </location>
</feature>
<feature type="chain" id="PRO_0000147455" description="Methyl-coenzyme M reductase subunit alpha">
    <location>
        <begin position="2"/>
        <end position="550"/>
    </location>
</feature>
<feature type="binding site" description="axial binding residue" evidence="1">
    <location>
        <position position="147"/>
    </location>
    <ligand>
        <name>coenzyme F430</name>
        <dbReference type="ChEBI" id="CHEBI:60540"/>
    </ligand>
    <ligandPart>
        <name>Ni</name>
        <dbReference type="ChEBI" id="CHEBI:28112"/>
    </ligandPart>
</feature>
<feature type="binding site" description="in chain A" evidence="1">
    <location>
        <position position="225"/>
    </location>
    <ligand>
        <name>coenzyme B</name>
        <dbReference type="ChEBI" id="CHEBI:58596"/>
        <note>ligand shared between two alpha subunits</note>
    </ligand>
</feature>
<feature type="binding site" description="in chain A" evidence="1">
    <location>
        <begin position="256"/>
        <end position="257"/>
    </location>
    <ligand>
        <name>coenzyme B</name>
        <dbReference type="ChEBI" id="CHEBI:58596"/>
        <note>ligand shared between two alpha subunits</note>
    </ligand>
</feature>
<feature type="binding site" description="in chain B" evidence="1">
    <location>
        <position position="270"/>
    </location>
    <ligand>
        <name>coenzyme B</name>
        <dbReference type="ChEBI" id="CHEBI:58596"/>
        <note>ligand shared between two alpha subunits</note>
    </ligand>
</feature>
<feature type="binding site" evidence="1">
    <location>
        <position position="333"/>
    </location>
    <ligand>
        <name>coenzyme M</name>
        <dbReference type="ChEBI" id="CHEBI:58319"/>
    </ligand>
</feature>
<feature type="binding site" evidence="1">
    <location>
        <position position="444"/>
    </location>
    <ligand>
        <name>coenzyme M</name>
        <dbReference type="ChEBI" id="CHEBI:58319"/>
    </ligand>
</feature>
<feature type="modified residue" description="Pros-methylhistidine" evidence="1">
    <location>
        <position position="257"/>
    </location>
</feature>
<feature type="modified residue" description="5-methylarginine" evidence="1">
    <location>
        <position position="271"/>
    </location>
</feature>
<feature type="modified residue" description="2-methylglutamine" evidence="1">
    <location>
        <position position="400"/>
    </location>
</feature>
<feature type="modified residue" description="1-thioglycine" evidence="1">
    <location>
        <position position="445"/>
    </location>
</feature>
<feature type="modified residue" description="(Z)-2,3-didehydroaspartate" evidence="1">
    <location>
        <position position="450"/>
    </location>
</feature>
<feature type="modified residue" description="S-methylcysteine" evidence="1">
    <location>
        <position position="452"/>
    </location>
</feature>
<feature type="sequence conflict" description="In Ref. 1; AAA73445." evidence="6" ref="1">
    <original>D</original>
    <variation>E</variation>
    <location>
        <position position="288"/>
    </location>
</feature>
<organism>
    <name type="scientific">Methanothermobacter thermautotrophicus (strain ATCC 29096 / DSM 1053 / JCM 10044 / NBRC 100330 / Delta H)</name>
    <name type="common">Methanobacterium thermoautotrophicum</name>
    <dbReference type="NCBI Taxonomy" id="187420"/>
    <lineage>
        <taxon>Archaea</taxon>
        <taxon>Methanobacteriati</taxon>
        <taxon>Methanobacteriota</taxon>
        <taxon>Methanomada group</taxon>
        <taxon>Methanobacteria</taxon>
        <taxon>Methanobacteriales</taxon>
        <taxon>Methanobacteriaceae</taxon>
        <taxon>Methanothermobacter</taxon>
    </lineage>
</organism>
<keyword id="KW-0963">Cytoplasm</keyword>
<keyword id="KW-0903">Direct protein sequencing</keyword>
<keyword id="KW-0479">Metal-binding</keyword>
<keyword id="KW-0484">Methanogenesis</keyword>
<keyword id="KW-0488">Methylation</keyword>
<keyword id="KW-0533">Nickel</keyword>
<keyword id="KW-1185">Reference proteome</keyword>
<keyword id="KW-0808">Transferase</keyword>
<evidence type="ECO:0000250" key="1">
    <source>
        <dbReference type="UniProtKB" id="P11558"/>
    </source>
</evidence>
<evidence type="ECO:0000250" key="2">
    <source>
        <dbReference type="UniProtKB" id="Q8THH1"/>
    </source>
</evidence>
<evidence type="ECO:0000269" key="3">
    <source>
    </source>
</evidence>
<evidence type="ECO:0000269" key="4">
    <source>
    </source>
</evidence>
<evidence type="ECO:0000303" key="5">
    <source>
    </source>
</evidence>
<evidence type="ECO:0000305" key="6"/>
<evidence type="ECO:0000305" key="7">
    <source>
    </source>
</evidence>
<name>MCRA_METTH</name>
<protein>
    <recommendedName>
        <fullName evidence="5">Methyl-coenzyme M reductase subunit alpha</fullName>
        <shortName evidence="5">MCR I alpha</shortName>
        <ecNumber evidence="3 4">2.8.4.1</ecNumber>
    </recommendedName>
    <alternativeName>
        <fullName>Coenzyme-B sulfoethylthiotransferase alpha</fullName>
    </alternativeName>
</protein>
<dbReference type="EC" id="2.8.4.1" evidence="3 4"/>
<dbReference type="EMBL" id="U10036">
    <property type="protein sequence ID" value="AAA73445.1"/>
    <property type="molecule type" value="Genomic_DNA"/>
</dbReference>
<dbReference type="EMBL" id="AE000666">
    <property type="protein sequence ID" value="AAB85653.1"/>
    <property type="molecule type" value="Genomic_DNA"/>
</dbReference>
<dbReference type="PIR" id="B69022">
    <property type="entry name" value="B69022"/>
</dbReference>
<dbReference type="RefSeq" id="WP_010876788.1">
    <property type="nucleotide sequence ID" value="NC_000916.1"/>
</dbReference>
<dbReference type="SMR" id="O27232"/>
<dbReference type="IntAct" id="O27232">
    <property type="interactions" value="2"/>
</dbReference>
<dbReference type="STRING" id="187420.MTH_1164"/>
<dbReference type="PaxDb" id="187420-MTH_1164"/>
<dbReference type="EnsemblBacteria" id="AAB85653">
    <property type="protein sequence ID" value="AAB85653"/>
    <property type="gene ID" value="MTH_1164"/>
</dbReference>
<dbReference type="GeneID" id="1471572"/>
<dbReference type="GeneID" id="77401693"/>
<dbReference type="KEGG" id="mth:MTH_1164"/>
<dbReference type="PATRIC" id="fig|187420.15.peg.1141"/>
<dbReference type="HOGENOM" id="CLU_493170_0_0_2"/>
<dbReference type="InParanoid" id="O27232"/>
<dbReference type="BioCyc" id="MetaCyc:MCRAMAUTO-MONOMER"/>
<dbReference type="UniPathway" id="UPA00646">
    <property type="reaction ID" value="UER00699"/>
</dbReference>
<dbReference type="Proteomes" id="UP000005223">
    <property type="component" value="Chromosome"/>
</dbReference>
<dbReference type="GO" id="GO:0005737">
    <property type="term" value="C:cytoplasm"/>
    <property type="evidence" value="ECO:0007669"/>
    <property type="project" value="UniProtKB-SubCell"/>
</dbReference>
<dbReference type="GO" id="GO:0050524">
    <property type="term" value="F:coenzyme-B sulfoethylthiotransferase activity"/>
    <property type="evidence" value="ECO:0007669"/>
    <property type="project" value="UniProtKB-EC"/>
</dbReference>
<dbReference type="GO" id="GO:0046872">
    <property type="term" value="F:metal ion binding"/>
    <property type="evidence" value="ECO:0007669"/>
    <property type="project" value="UniProtKB-KW"/>
</dbReference>
<dbReference type="GO" id="GO:0015948">
    <property type="term" value="P:methanogenesis"/>
    <property type="evidence" value="ECO:0007669"/>
    <property type="project" value="UniProtKB-KW"/>
</dbReference>
<dbReference type="FunFam" id="3.30.70.470:FF:000001">
    <property type="entry name" value="Methyl-coenzyme M reductase I subunit alpha"/>
    <property type="match status" value="1"/>
</dbReference>
<dbReference type="FunFam" id="1.20.840.10:FF:000001">
    <property type="entry name" value="Methyl-coenzyme M reductase subunit alpha"/>
    <property type="match status" value="1"/>
</dbReference>
<dbReference type="Gene3D" id="3.30.70.470">
    <property type="match status" value="1"/>
</dbReference>
<dbReference type="Gene3D" id="1.20.840.10">
    <property type="entry name" value="Methyl-coenzyme M reductase, alpha/beta subunit, C-terminal"/>
    <property type="match status" value="1"/>
</dbReference>
<dbReference type="Gene3D" id="3.90.390.10">
    <property type="entry name" value="Methyl-coenzyme M Reductase, Chain A, domain 1"/>
    <property type="match status" value="1"/>
</dbReference>
<dbReference type="InterPro" id="IPR016212">
    <property type="entry name" value="Me_CoM_Rdtase_asu"/>
</dbReference>
<dbReference type="InterPro" id="IPR008924">
    <property type="entry name" value="Me_CoM_Rdtase_asu/bsu_C"/>
</dbReference>
<dbReference type="InterPro" id="IPR009047">
    <property type="entry name" value="Me_CoM_Rdtase_asu_C"/>
</dbReference>
<dbReference type="InterPro" id="IPR003183">
    <property type="entry name" value="Me_CoM_Rdtase_asu_N"/>
</dbReference>
<dbReference type="InterPro" id="IPR015811">
    <property type="entry name" value="Me_CoM_Rdtase_asu_N_sub1"/>
</dbReference>
<dbReference type="InterPro" id="IPR015823">
    <property type="entry name" value="Me_CoM_Rdtase_asu_N_sub2"/>
</dbReference>
<dbReference type="InterPro" id="IPR009024">
    <property type="entry name" value="Me_CoM_Rdtase_Fd-like_fold"/>
</dbReference>
<dbReference type="NCBIfam" id="TIGR03256">
    <property type="entry name" value="met_CoM_red_alp"/>
    <property type="match status" value="1"/>
</dbReference>
<dbReference type="Pfam" id="PF02249">
    <property type="entry name" value="MCR_alpha"/>
    <property type="match status" value="1"/>
</dbReference>
<dbReference type="Pfam" id="PF02745">
    <property type="entry name" value="MCR_alpha_N"/>
    <property type="match status" value="1"/>
</dbReference>
<dbReference type="PIRSF" id="PIRSF000262">
    <property type="entry name" value="MCR_alpha"/>
    <property type="match status" value="1"/>
</dbReference>
<dbReference type="SUPFAM" id="SSF48081">
    <property type="entry name" value="Methyl-coenzyme M reductase alpha and beta chain C-terminal domain"/>
    <property type="match status" value="1"/>
</dbReference>
<dbReference type="SUPFAM" id="SSF55088">
    <property type="entry name" value="Methyl-coenzyme M reductase subunits"/>
    <property type="match status" value="1"/>
</dbReference>